<evidence type="ECO:0000255" key="1">
    <source>
        <dbReference type="HAMAP-Rule" id="MF_00009"/>
    </source>
</evidence>
<dbReference type="EC" id="3.1.-.-" evidence="1"/>
<dbReference type="EMBL" id="CP000454">
    <property type="protein sequence ID" value="ABK03611.1"/>
    <property type="molecule type" value="Genomic_DNA"/>
</dbReference>
<dbReference type="RefSeq" id="WP_011692075.1">
    <property type="nucleotide sequence ID" value="NC_008541.1"/>
</dbReference>
<dbReference type="SMR" id="A0JX41"/>
<dbReference type="STRING" id="290399.Arth_2231"/>
<dbReference type="KEGG" id="art:Arth_2231"/>
<dbReference type="eggNOG" id="COG0319">
    <property type="taxonomic scope" value="Bacteria"/>
</dbReference>
<dbReference type="HOGENOM" id="CLU_106710_3_2_11"/>
<dbReference type="OrthoDB" id="9807740at2"/>
<dbReference type="Proteomes" id="UP000000754">
    <property type="component" value="Chromosome"/>
</dbReference>
<dbReference type="GO" id="GO:0005737">
    <property type="term" value="C:cytoplasm"/>
    <property type="evidence" value="ECO:0007669"/>
    <property type="project" value="UniProtKB-SubCell"/>
</dbReference>
<dbReference type="GO" id="GO:0004222">
    <property type="term" value="F:metalloendopeptidase activity"/>
    <property type="evidence" value="ECO:0007669"/>
    <property type="project" value="InterPro"/>
</dbReference>
<dbReference type="GO" id="GO:0004521">
    <property type="term" value="F:RNA endonuclease activity"/>
    <property type="evidence" value="ECO:0007669"/>
    <property type="project" value="UniProtKB-UniRule"/>
</dbReference>
<dbReference type="GO" id="GO:0008270">
    <property type="term" value="F:zinc ion binding"/>
    <property type="evidence" value="ECO:0007669"/>
    <property type="project" value="UniProtKB-UniRule"/>
</dbReference>
<dbReference type="GO" id="GO:0006364">
    <property type="term" value="P:rRNA processing"/>
    <property type="evidence" value="ECO:0007669"/>
    <property type="project" value="UniProtKB-UniRule"/>
</dbReference>
<dbReference type="Gene3D" id="3.40.390.30">
    <property type="entry name" value="Metalloproteases ('zincins'), catalytic domain"/>
    <property type="match status" value="1"/>
</dbReference>
<dbReference type="HAMAP" id="MF_00009">
    <property type="entry name" value="Endoribonucl_YbeY"/>
    <property type="match status" value="1"/>
</dbReference>
<dbReference type="InterPro" id="IPR023091">
    <property type="entry name" value="MetalPrtase_cat_dom_sf_prd"/>
</dbReference>
<dbReference type="InterPro" id="IPR002036">
    <property type="entry name" value="YbeY"/>
</dbReference>
<dbReference type="InterPro" id="IPR020549">
    <property type="entry name" value="YbeY_CS"/>
</dbReference>
<dbReference type="NCBIfam" id="TIGR00043">
    <property type="entry name" value="rRNA maturation RNase YbeY"/>
    <property type="match status" value="1"/>
</dbReference>
<dbReference type="PANTHER" id="PTHR46986">
    <property type="entry name" value="ENDORIBONUCLEASE YBEY, CHLOROPLASTIC"/>
    <property type="match status" value="1"/>
</dbReference>
<dbReference type="PANTHER" id="PTHR46986:SF1">
    <property type="entry name" value="ENDORIBONUCLEASE YBEY, CHLOROPLASTIC"/>
    <property type="match status" value="1"/>
</dbReference>
<dbReference type="Pfam" id="PF02130">
    <property type="entry name" value="YbeY"/>
    <property type="match status" value="1"/>
</dbReference>
<dbReference type="SUPFAM" id="SSF55486">
    <property type="entry name" value="Metalloproteases ('zincins'), catalytic domain"/>
    <property type="match status" value="1"/>
</dbReference>
<dbReference type="PROSITE" id="PS01306">
    <property type="entry name" value="UPF0054"/>
    <property type="match status" value="1"/>
</dbReference>
<comment type="function">
    <text evidence="1">Single strand-specific metallo-endoribonuclease involved in late-stage 70S ribosome quality control and in maturation of the 3' terminus of the 16S rRNA.</text>
</comment>
<comment type="cofactor">
    <cofactor evidence="1">
        <name>Zn(2+)</name>
        <dbReference type="ChEBI" id="CHEBI:29105"/>
    </cofactor>
    <text evidence="1">Binds 1 zinc ion.</text>
</comment>
<comment type="subcellular location">
    <subcellularLocation>
        <location evidence="1">Cytoplasm</location>
    </subcellularLocation>
</comment>
<comment type="similarity">
    <text evidence="1">Belongs to the endoribonuclease YbeY family.</text>
</comment>
<proteinExistence type="inferred from homology"/>
<keyword id="KW-0963">Cytoplasm</keyword>
<keyword id="KW-0255">Endonuclease</keyword>
<keyword id="KW-0378">Hydrolase</keyword>
<keyword id="KW-0479">Metal-binding</keyword>
<keyword id="KW-0540">Nuclease</keyword>
<keyword id="KW-1185">Reference proteome</keyword>
<keyword id="KW-0690">Ribosome biogenesis</keyword>
<keyword id="KW-0698">rRNA processing</keyword>
<keyword id="KW-0862">Zinc</keyword>
<name>YBEY_ARTS2</name>
<gene>
    <name evidence="1" type="primary">ybeY</name>
    <name type="ordered locus">Arth_2231</name>
</gene>
<protein>
    <recommendedName>
        <fullName evidence="1">Endoribonuclease YbeY</fullName>
        <ecNumber evidence="1">3.1.-.-</ecNumber>
    </recommendedName>
</protein>
<feature type="chain" id="PRO_0000284158" description="Endoribonuclease YbeY">
    <location>
        <begin position="1"/>
        <end position="157"/>
    </location>
</feature>
<feature type="binding site" evidence="1">
    <location>
        <position position="116"/>
    </location>
    <ligand>
        <name>Zn(2+)</name>
        <dbReference type="ChEBI" id="CHEBI:29105"/>
        <note>catalytic</note>
    </ligand>
</feature>
<feature type="binding site" evidence="1">
    <location>
        <position position="120"/>
    </location>
    <ligand>
        <name>Zn(2+)</name>
        <dbReference type="ChEBI" id="CHEBI:29105"/>
        <note>catalytic</note>
    </ligand>
</feature>
<feature type="binding site" evidence="1">
    <location>
        <position position="126"/>
    </location>
    <ligand>
        <name>Zn(2+)</name>
        <dbReference type="ChEBI" id="CHEBI:29105"/>
        <note>catalytic</note>
    </ligand>
</feature>
<accession>A0JX41</accession>
<reference key="1">
    <citation type="journal article" date="2013" name="Stand. Genomic Sci.">
        <title>Complete genome sequence of Arthrobacter sp. strain FB24.</title>
        <authorList>
            <person name="Nakatsu C.H."/>
            <person name="Barabote R."/>
            <person name="Thompson S."/>
            <person name="Bruce D."/>
            <person name="Detter C."/>
            <person name="Brettin T."/>
            <person name="Han C."/>
            <person name="Beasley F."/>
            <person name="Chen W."/>
            <person name="Konopka A."/>
            <person name="Xie G."/>
        </authorList>
    </citation>
    <scope>NUCLEOTIDE SEQUENCE [LARGE SCALE GENOMIC DNA]</scope>
    <source>
        <strain>FB24</strain>
    </source>
</reference>
<organism>
    <name type="scientific">Arthrobacter sp. (strain FB24)</name>
    <dbReference type="NCBI Taxonomy" id="290399"/>
    <lineage>
        <taxon>Bacteria</taxon>
        <taxon>Bacillati</taxon>
        <taxon>Actinomycetota</taxon>
        <taxon>Actinomycetes</taxon>
        <taxon>Micrococcales</taxon>
        <taxon>Micrococcaceae</taxon>
        <taxon>Arthrobacter</taxon>
    </lineage>
</organism>
<sequence length="157" mass="17262">MSIEVNNESGVTVDEAQLVALARFVFERLYIHPQAELSILLVDEPAMEKLHLELMDEPGATDVLSVPMDELTPGTPDKPTPQGMLGDIAVCPQVAEVQARNAGHSTQDEMLLLTTHGILHLLGYDHADPEEKEEMFGLQRELLEGFTGKEAPSETMQ</sequence>